<organism>
    <name type="scientific">Pan troglodytes</name>
    <name type="common">Chimpanzee</name>
    <dbReference type="NCBI Taxonomy" id="9598"/>
    <lineage>
        <taxon>Eukaryota</taxon>
        <taxon>Metazoa</taxon>
        <taxon>Chordata</taxon>
        <taxon>Craniata</taxon>
        <taxon>Vertebrata</taxon>
        <taxon>Euteleostomi</taxon>
        <taxon>Mammalia</taxon>
        <taxon>Eutheria</taxon>
        <taxon>Euarchontoglires</taxon>
        <taxon>Primates</taxon>
        <taxon>Haplorrhini</taxon>
        <taxon>Catarrhini</taxon>
        <taxon>Hominidae</taxon>
        <taxon>Pan</taxon>
    </lineage>
</organism>
<comment type="subunit">
    <text evidence="1">Thyroid receptor interacting proteins (TRIPs) specifically interact with the ligand binding domain of the thyroid receptor (TR) (By similarity). Requires the presence of thyroid hormone for its interaction (By similarity). Interacts with NUFIP1 (By similarity). Interacts (via HIT-type zinc finger) with the RUVBL1/RUVBL2 complex in the presence of ADP (By similarity).</text>
</comment>
<comment type="subcellular location">
    <subcellularLocation>
        <location evidence="1">Cytoplasm</location>
    </subcellularLocation>
    <subcellularLocation>
        <location evidence="1">Nucleus</location>
    </subcellularLocation>
</comment>
<proteinExistence type="evidence at transcript level"/>
<feature type="chain" id="PRO_0000173553" description="Zinc finger HIT domain-containing protein 3">
    <location>
        <begin position="1" status="less than"/>
        <end position="141"/>
    </location>
</feature>
<feature type="zinc finger region" description="HIT-type; degenerate" evidence="2">
    <location>
        <begin position="1" status="less than"/>
        <end position="28"/>
    </location>
</feature>
<feature type="binding site" evidence="2">
    <location>
        <position position="8"/>
    </location>
    <ligand>
        <name>Zn(2+)</name>
        <dbReference type="ChEBI" id="CHEBI:29105"/>
    </ligand>
</feature>
<feature type="binding site" evidence="2">
    <location>
        <position position="11"/>
    </location>
    <ligand>
        <name>Zn(2+)</name>
        <dbReference type="ChEBI" id="CHEBI:29105"/>
    </ligand>
</feature>
<feature type="binding site" evidence="2">
    <location>
        <position position="24"/>
    </location>
    <ligand>
        <name>Zn(2+)</name>
        <dbReference type="ChEBI" id="CHEBI:29105"/>
    </ligand>
</feature>
<feature type="binding site" evidence="2">
    <location>
        <position position="28"/>
    </location>
    <ligand>
        <name>Zn(2+)</name>
        <dbReference type="ChEBI" id="CHEBI:29105"/>
    </ligand>
</feature>
<feature type="modified residue" description="Phosphoserine" evidence="1">
    <location>
        <position position="66"/>
    </location>
</feature>
<feature type="non-terminal residue">
    <location>
        <position position="1"/>
    </location>
</feature>
<protein>
    <recommendedName>
        <fullName>Zinc finger HIT domain-containing protein 3</fullName>
    </recommendedName>
    <alternativeName>
        <fullName>Thyroid hormone receptor interactor 3</fullName>
    </alternativeName>
    <alternativeName>
        <fullName>Thyroid receptor-interacting protein 3</fullName>
        <shortName>TR-interacting protein 3</shortName>
        <shortName>TRIP-3</shortName>
    </alternativeName>
</protein>
<gene>
    <name type="primary">ZNHIT3</name>
    <name type="synonym">TRIP3</name>
</gene>
<reference key="1">
    <citation type="journal article" date="2003" name="Proc. Natl. Acad. Sci. U.S.A.">
        <title>Elevated gene expression levels distinguish human from non-human primate brains.</title>
        <authorList>
            <person name="Caceres M."/>
            <person name="Lachuer J."/>
            <person name="Zapala M.A."/>
            <person name="Redmond J.C."/>
            <person name="Kudo L."/>
            <person name="Geschwind D.H."/>
            <person name="Lockhart D.J."/>
            <person name="Preuss T.M."/>
            <person name="Barlow C."/>
        </authorList>
    </citation>
    <scope>NUCLEOTIDE SEQUENCE [MRNA]</scope>
</reference>
<accession>Q6UIM2</accession>
<name>ZNHI3_PANTR</name>
<sequence length="141" mass="16140">LEKPKYRCPACRVPYCSVACFRKHKEQCNPETRPVEKKIRSALPTKTVKPVENKDDDDSIADFLNSDEEEDRVSLQNLKNLGESATLRSLLLNPHLRQLMVNLDQGEDKAKLMRAYMQEPLFVEFADCCLGIVEPSQNEES</sequence>
<keyword id="KW-0963">Cytoplasm</keyword>
<keyword id="KW-0479">Metal-binding</keyword>
<keyword id="KW-0539">Nucleus</keyword>
<keyword id="KW-0597">Phosphoprotein</keyword>
<keyword id="KW-1185">Reference proteome</keyword>
<keyword id="KW-0862">Zinc</keyword>
<keyword id="KW-0863">Zinc-finger</keyword>
<dbReference type="EMBL" id="AY369848">
    <property type="protein sequence ID" value="AAR11273.1"/>
    <property type="molecule type" value="mRNA"/>
</dbReference>
<dbReference type="RefSeq" id="NP_001181858.1">
    <property type="nucleotide sequence ID" value="NM_001194929.1"/>
</dbReference>
<dbReference type="SMR" id="Q6UIM2"/>
<dbReference type="STRING" id="9598.ENSPTRP00000015423"/>
<dbReference type="PaxDb" id="9598-ENSPTRP00000015423"/>
<dbReference type="GeneID" id="450175"/>
<dbReference type="CTD" id="9326"/>
<dbReference type="eggNOG" id="KOG2857">
    <property type="taxonomic scope" value="Eukaryota"/>
</dbReference>
<dbReference type="InParanoid" id="Q6UIM2"/>
<dbReference type="OrthoDB" id="8039at9604"/>
<dbReference type="Proteomes" id="UP000002277">
    <property type="component" value="Unplaced"/>
</dbReference>
<dbReference type="GO" id="GO:0005737">
    <property type="term" value="C:cytoplasm"/>
    <property type="evidence" value="ECO:0000250"/>
    <property type="project" value="UniProtKB"/>
</dbReference>
<dbReference type="GO" id="GO:0005634">
    <property type="term" value="C:nucleus"/>
    <property type="evidence" value="ECO:0000250"/>
    <property type="project" value="UniProtKB"/>
</dbReference>
<dbReference type="GO" id="GO:0070761">
    <property type="term" value="C:pre-snoRNP complex"/>
    <property type="evidence" value="ECO:0000318"/>
    <property type="project" value="GO_Central"/>
</dbReference>
<dbReference type="GO" id="GO:0008270">
    <property type="term" value="F:zinc ion binding"/>
    <property type="evidence" value="ECO:0007669"/>
    <property type="project" value="UniProtKB-KW"/>
</dbReference>
<dbReference type="GO" id="GO:0000492">
    <property type="term" value="P:box C/D snoRNP assembly"/>
    <property type="evidence" value="ECO:0000318"/>
    <property type="project" value="GO_Central"/>
</dbReference>
<dbReference type="GO" id="GO:0000463">
    <property type="term" value="P:maturation of LSU-rRNA from tricistronic rRNA transcript (SSU-rRNA, 5.8S rRNA, LSU-rRNA)"/>
    <property type="evidence" value="ECO:0000318"/>
    <property type="project" value="GO_Central"/>
</dbReference>
<dbReference type="GO" id="GO:0048254">
    <property type="term" value="P:snoRNA localization"/>
    <property type="evidence" value="ECO:0000318"/>
    <property type="project" value="GO_Central"/>
</dbReference>
<dbReference type="CDD" id="cd23024">
    <property type="entry name" value="zf-HIT_ZNHIT2-3"/>
    <property type="match status" value="1"/>
</dbReference>
<dbReference type="FunFam" id="3.30.60.190:FF:000002">
    <property type="entry name" value="Zinc finger HIT domain-containing protein 3"/>
    <property type="match status" value="1"/>
</dbReference>
<dbReference type="Gene3D" id="3.30.60.190">
    <property type="match status" value="1"/>
</dbReference>
<dbReference type="InterPro" id="IPR051639">
    <property type="entry name" value="BCD1"/>
</dbReference>
<dbReference type="InterPro" id="IPR007529">
    <property type="entry name" value="Znf_HIT"/>
</dbReference>
<dbReference type="InterPro" id="IPR048371">
    <property type="entry name" value="ZNHIT3_C"/>
</dbReference>
<dbReference type="PANTHER" id="PTHR13483">
    <property type="entry name" value="BOX C_D SNORNA PROTEIN 1-RELATED"/>
    <property type="match status" value="1"/>
</dbReference>
<dbReference type="PANTHER" id="PTHR13483:SF11">
    <property type="entry name" value="ZINC FINGER HIT DOMAIN-CONTAINING PROTEIN 3"/>
    <property type="match status" value="1"/>
</dbReference>
<dbReference type="Pfam" id="PF04438">
    <property type="entry name" value="zf-HIT"/>
    <property type="match status" value="1"/>
</dbReference>
<dbReference type="Pfam" id="PF21373">
    <property type="entry name" value="ZNHIT3_C"/>
    <property type="match status" value="1"/>
</dbReference>
<dbReference type="SUPFAM" id="SSF144232">
    <property type="entry name" value="HIT/MYND zinc finger-like"/>
    <property type="match status" value="1"/>
</dbReference>
<dbReference type="PROSITE" id="PS51083">
    <property type="entry name" value="ZF_HIT"/>
    <property type="match status" value="1"/>
</dbReference>
<evidence type="ECO:0000250" key="1">
    <source>
        <dbReference type="UniProtKB" id="Q15649"/>
    </source>
</evidence>
<evidence type="ECO:0000255" key="2">
    <source>
        <dbReference type="PROSITE-ProRule" id="PRU00453"/>
    </source>
</evidence>